<protein>
    <recommendedName>
        <fullName evidence="1">DNA mismatch repair protein MutS</fullName>
    </recommendedName>
</protein>
<reference key="1">
    <citation type="journal article" date="2003" name="Science">
        <title>A genomic view of the human-Bacteroides thetaiotaomicron symbiosis.</title>
        <authorList>
            <person name="Xu J."/>
            <person name="Bjursell M.K."/>
            <person name="Himrod J."/>
            <person name="Deng S."/>
            <person name="Carmichael L.K."/>
            <person name="Chiang H.C."/>
            <person name="Hooper L.V."/>
            <person name="Gordon J.I."/>
        </authorList>
    </citation>
    <scope>NUCLEOTIDE SEQUENCE [LARGE SCALE GENOMIC DNA]</scope>
    <source>
        <strain>ATCC 29148 / DSM 2079 / JCM 5827 / CCUG 10774 / NCTC 10582 / VPI-5482 / E50</strain>
    </source>
</reference>
<feature type="chain" id="PRO_0000115071" description="DNA mismatch repair protein MutS">
    <location>
        <begin position="1"/>
        <end position="862"/>
    </location>
</feature>
<feature type="binding site" evidence="1">
    <location>
        <begin position="608"/>
        <end position="615"/>
    </location>
    <ligand>
        <name>ATP</name>
        <dbReference type="ChEBI" id="CHEBI:30616"/>
    </ligand>
</feature>
<keyword id="KW-0067">ATP-binding</keyword>
<keyword id="KW-0227">DNA damage</keyword>
<keyword id="KW-0234">DNA repair</keyword>
<keyword id="KW-0238">DNA-binding</keyword>
<keyword id="KW-0547">Nucleotide-binding</keyword>
<keyword id="KW-1185">Reference proteome</keyword>
<accession>Q8A334</accession>
<organism>
    <name type="scientific">Bacteroides thetaiotaomicron (strain ATCC 29148 / DSM 2079 / JCM 5827 / CCUG 10774 / NCTC 10582 / VPI-5482 / E50)</name>
    <dbReference type="NCBI Taxonomy" id="226186"/>
    <lineage>
        <taxon>Bacteria</taxon>
        <taxon>Pseudomonadati</taxon>
        <taxon>Bacteroidota</taxon>
        <taxon>Bacteroidia</taxon>
        <taxon>Bacteroidales</taxon>
        <taxon>Bacteroidaceae</taxon>
        <taxon>Bacteroides</taxon>
    </lineage>
</organism>
<sequence length="862" mass="97331">MMKQFLDLKAKHPDAVMLFRCGDFYETYSTDAIVASEILGITLTKRANGKGKTIEMAGFPHHALDTYLPKLIRAGKRVAICDQLEDPKLTKKLVKRGITELVTPGVSINDNVLNYKENNFLAAVHFGKASCGVAFLDISTGEFLTAEGPFDYVDKLLNNFGPKEILFERGKRLMFEGNFGSKFFTFELDDWVFTESTAREKLLKHFETKNLKGFGVEHLKNGIIASGAILQYLTMTQHTQIGHITSLARIEEDKYVRLDKFTVRSLELIGSMNDGGSSLLNVIDRTISPMGARLLKRWMVFPLKDEKPINDRLNVVEYFFRQPDFKELIEEQLHLIGDLERIISKVAVGRVSPREVVQLKVALQAIEPIKQACLEADNASLNRIGEQLNLCISIRDRIAKEINNDPPLLINKGGVIKDGVNEELDELRRISYSGKDYLLQIQQRESEQTGIPSLKVAYNNVFGYYIEVRNIHKDKVPQEWIRKQTLVNAERYITQELKVYEEKILGAEDKILVLETQLYTDLVQALTEFIPQIQINANQIARLDCLLSFANVARENNYIRPVIEDNDVLDIRQGRHPVIEKQLPIGEKYIANDVMLDSASQQIIIITGPNMAGKSALLRQTALITLLAQIGSFVPAESAHIGLVDKIFTRVGASDNISVGESTFMVEMNEAADILNNVSSRSLVLFDELGRGTSTYDGISIAWAIVEYIHEHPKAKARTLFATHYHELNEMEKSFKRIKNYNVSVKEVDNKVIFLRKLERGGSEHSFGIHVAKMAGMPKSIVKRANTILKQLESDNRQQGISGKPLTEVSENRSGMQLSFFQLDDPILCQIRDEILNLDVNNLTPIEALNKLNDIKKIVRGK</sequence>
<name>MUTS_BACTN</name>
<gene>
    <name evidence="1" type="primary">mutS</name>
    <name type="ordered locus">BT_3121</name>
</gene>
<comment type="function">
    <text evidence="1">This protein is involved in the repair of mismatches in DNA. It is possible that it carries out the mismatch recognition step. This protein has a weak ATPase activity.</text>
</comment>
<comment type="similarity">
    <text evidence="1">Belongs to the DNA mismatch repair MutS family.</text>
</comment>
<dbReference type="EMBL" id="AE015928">
    <property type="protein sequence ID" value="AAO78227.1"/>
    <property type="molecule type" value="Genomic_DNA"/>
</dbReference>
<dbReference type="RefSeq" id="NP_812033.1">
    <property type="nucleotide sequence ID" value="NC_004663.1"/>
</dbReference>
<dbReference type="RefSeq" id="WP_011108646.1">
    <property type="nucleotide sequence ID" value="NZ_UYXG01000001.1"/>
</dbReference>
<dbReference type="SMR" id="Q8A334"/>
<dbReference type="FunCoup" id="Q8A334">
    <property type="interactions" value="442"/>
</dbReference>
<dbReference type="STRING" id="226186.BT_3121"/>
<dbReference type="PaxDb" id="226186-BT_3121"/>
<dbReference type="EnsemblBacteria" id="AAO78227">
    <property type="protein sequence ID" value="AAO78227"/>
    <property type="gene ID" value="BT_3121"/>
</dbReference>
<dbReference type="GeneID" id="60924303"/>
<dbReference type="KEGG" id="bth:BT_3121"/>
<dbReference type="PATRIC" id="fig|226186.12.peg.3185"/>
<dbReference type="eggNOG" id="COG0249">
    <property type="taxonomic scope" value="Bacteria"/>
</dbReference>
<dbReference type="HOGENOM" id="CLU_002472_3_1_10"/>
<dbReference type="InParanoid" id="Q8A334"/>
<dbReference type="OrthoDB" id="9802448at2"/>
<dbReference type="Proteomes" id="UP000001414">
    <property type="component" value="Chromosome"/>
</dbReference>
<dbReference type="GO" id="GO:0005829">
    <property type="term" value="C:cytosol"/>
    <property type="evidence" value="ECO:0000318"/>
    <property type="project" value="GO_Central"/>
</dbReference>
<dbReference type="GO" id="GO:0005524">
    <property type="term" value="F:ATP binding"/>
    <property type="evidence" value="ECO:0007669"/>
    <property type="project" value="UniProtKB-UniRule"/>
</dbReference>
<dbReference type="GO" id="GO:0140664">
    <property type="term" value="F:ATP-dependent DNA damage sensor activity"/>
    <property type="evidence" value="ECO:0007669"/>
    <property type="project" value="InterPro"/>
</dbReference>
<dbReference type="GO" id="GO:0003684">
    <property type="term" value="F:damaged DNA binding"/>
    <property type="evidence" value="ECO:0007669"/>
    <property type="project" value="UniProtKB-UniRule"/>
</dbReference>
<dbReference type="GO" id="GO:0030983">
    <property type="term" value="F:mismatched DNA binding"/>
    <property type="evidence" value="ECO:0000318"/>
    <property type="project" value="GO_Central"/>
</dbReference>
<dbReference type="GO" id="GO:0006298">
    <property type="term" value="P:mismatch repair"/>
    <property type="evidence" value="ECO:0000318"/>
    <property type="project" value="GO_Central"/>
</dbReference>
<dbReference type="CDD" id="cd03284">
    <property type="entry name" value="ABC_MutS1"/>
    <property type="match status" value="1"/>
</dbReference>
<dbReference type="FunFam" id="1.10.1420.10:FF:000002">
    <property type="entry name" value="DNA mismatch repair protein MutS"/>
    <property type="match status" value="1"/>
</dbReference>
<dbReference type="Gene3D" id="1.10.1420.10">
    <property type="match status" value="2"/>
</dbReference>
<dbReference type="Gene3D" id="3.40.1170.10">
    <property type="entry name" value="DNA repair protein MutS, domain I"/>
    <property type="match status" value="1"/>
</dbReference>
<dbReference type="Gene3D" id="3.30.420.110">
    <property type="entry name" value="MutS, connector domain"/>
    <property type="match status" value="1"/>
</dbReference>
<dbReference type="Gene3D" id="3.40.50.300">
    <property type="entry name" value="P-loop containing nucleotide triphosphate hydrolases"/>
    <property type="match status" value="1"/>
</dbReference>
<dbReference type="HAMAP" id="MF_00096">
    <property type="entry name" value="MutS"/>
    <property type="match status" value="1"/>
</dbReference>
<dbReference type="InterPro" id="IPR005748">
    <property type="entry name" value="DNA_mismatch_repair_MutS"/>
</dbReference>
<dbReference type="InterPro" id="IPR007695">
    <property type="entry name" value="DNA_mismatch_repair_MutS-lik_N"/>
</dbReference>
<dbReference type="InterPro" id="IPR017261">
    <property type="entry name" value="DNA_mismatch_repair_MutS/MSH"/>
</dbReference>
<dbReference type="InterPro" id="IPR000432">
    <property type="entry name" value="DNA_mismatch_repair_MutS_C"/>
</dbReference>
<dbReference type="InterPro" id="IPR007861">
    <property type="entry name" value="DNA_mismatch_repair_MutS_clamp"/>
</dbReference>
<dbReference type="InterPro" id="IPR007696">
    <property type="entry name" value="DNA_mismatch_repair_MutS_core"/>
</dbReference>
<dbReference type="InterPro" id="IPR016151">
    <property type="entry name" value="DNA_mismatch_repair_MutS_N"/>
</dbReference>
<dbReference type="InterPro" id="IPR036187">
    <property type="entry name" value="DNA_mismatch_repair_MutS_sf"/>
</dbReference>
<dbReference type="InterPro" id="IPR007860">
    <property type="entry name" value="DNA_mmatch_repair_MutS_con_dom"/>
</dbReference>
<dbReference type="InterPro" id="IPR045076">
    <property type="entry name" value="MutS"/>
</dbReference>
<dbReference type="InterPro" id="IPR036678">
    <property type="entry name" value="MutS_con_dom_sf"/>
</dbReference>
<dbReference type="InterPro" id="IPR027417">
    <property type="entry name" value="P-loop_NTPase"/>
</dbReference>
<dbReference type="NCBIfam" id="TIGR01070">
    <property type="entry name" value="mutS1"/>
    <property type="match status" value="1"/>
</dbReference>
<dbReference type="NCBIfam" id="NF003810">
    <property type="entry name" value="PRK05399.1"/>
    <property type="match status" value="1"/>
</dbReference>
<dbReference type="PANTHER" id="PTHR11361:SF34">
    <property type="entry name" value="DNA MISMATCH REPAIR PROTEIN MSH1, MITOCHONDRIAL"/>
    <property type="match status" value="1"/>
</dbReference>
<dbReference type="PANTHER" id="PTHR11361">
    <property type="entry name" value="DNA MISMATCH REPAIR PROTEIN MUTS FAMILY MEMBER"/>
    <property type="match status" value="1"/>
</dbReference>
<dbReference type="Pfam" id="PF01624">
    <property type="entry name" value="MutS_I"/>
    <property type="match status" value="1"/>
</dbReference>
<dbReference type="Pfam" id="PF05188">
    <property type="entry name" value="MutS_II"/>
    <property type="match status" value="1"/>
</dbReference>
<dbReference type="Pfam" id="PF05192">
    <property type="entry name" value="MutS_III"/>
    <property type="match status" value="1"/>
</dbReference>
<dbReference type="Pfam" id="PF05190">
    <property type="entry name" value="MutS_IV"/>
    <property type="match status" value="1"/>
</dbReference>
<dbReference type="Pfam" id="PF00488">
    <property type="entry name" value="MutS_V"/>
    <property type="match status" value="1"/>
</dbReference>
<dbReference type="PIRSF" id="PIRSF037677">
    <property type="entry name" value="DNA_mis_repair_Msh6"/>
    <property type="match status" value="1"/>
</dbReference>
<dbReference type="SMART" id="SM00534">
    <property type="entry name" value="MUTSac"/>
    <property type="match status" value="1"/>
</dbReference>
<dbReference type="SMART" id="SM00533">
    <property type="entry name" value="MUTSd"/>
    <property type="match status" value="1"/>
</dbReference>
<dbReference type="SUPFAM" id="SSF55271">
    <property type="entry name" value="DNA repair protein MutS, domain I"/>
    <property type="match status" value="1"/>
</dbReference>
<dbReference type="SUPFAM" id="SSF53150">
    <property type="entry name" value="DNA repair protein MutS, domain II"/>
    <property type="match status" value="1"/>
</dbReference>
<dbReference type="SUPFAM" id="SSF48334">
    <property type="entry name" value="DNA repair protein MutS, domain III"/>
    <property type="match status" value="1"/>
</dbReference>
<dbReference type="SUPFAM" id="SSF52540">
    <property type="entry name" value="P-loop containing nucleoside triphosphate hydrolases"/>
    <property type="match status" value="1"/>
</dbReference>
<dbReference type="PROSITE" id="PS00486">
    <property type="entry name" value="DNA_MISMATCH_REPAIR_2"/>
    <property type="match status" value="1"/>
</dbReference>
<proteinExistence type="inferred from homology"/>
<evidence type="ECO:0000255" key="1">
    <source>
        <dbReference type="HAMAP-Rule" id="MF_00096"/>
    </source>
</evidence>